<gene>
    <name evidence="1" type="primary">atpF</name>
    <name type="ordered locus">Heak452_Cp079</name>
</gene>
<feature type="chain" id="PRO_0000368991" description="ATP synthase subunit b, chloroplastic">
    <location>
        <begin position="1"/>
        <end position="182"/>
    </location>
</feature>
<feature type="transmembrane region" description="Helical" evidence="1">
    <location>
        <begin position="29"/>
        <end position="47"/>
    </location>
</feature>
<geneLocation type="chloroplast"/>
<evidence type="ECO:0000255" key="1">
    <source>
        <dbReference type="HAMAP-Rule" id="MF_01398"/>
    </source>
</evidence>
<name>ATPF_HETA4</name>
<reference key="1">
    <citation type="journal article" date="2008" name="BMC Genomics">
        <title>Chloroplast genome sequencing analysis of Heterosigma akashiwo CCMP452 (West Atlantic) and NIES293 (West Pacific) strains.</title>
        <authorList>
            <person name="Cattolico R.A."/>
            <person name="Jacobs M.A."/>
            <person name="Zhou Y."/>
            <person name="Chang J."/>
            <person name="Duplessis M."/>
            <person name="Lybrand T."/>
            <person name="McKay J."/>
            <person name="Ong H.C."/>
            <person name="Sims E."/>
            <person name="Rocap G."/>
        </authorList>
    </citation>
    <scope>NUCLEOTIDE SEQUENCE [LARGE SCALE GENOMIC DNA]</scope>
</reference>
<proteinExistence type="inferred from homology"/>
<comment type="function">
    <text evidence="1">F(1)F(0) ATP synthase produces ATP from ADP in the presence of a proton or sodium gradient. F-type ATPases consist of two structural domains, F(1) containing the extramembraneous catalytic core and F(0) containing the membrane proton channel, linked together by a central stalk and a peripheral stalk. During catalysis, ATP synthesis in the catalytic domain of F(1) is coupled via a rotary mechanism of the central stalk subunits to proton translocation.</text>
</comment>
<comment type="function">
    <text evidence="1">Component of the F(0) channel, it forms part of the peripheral stalk, linking F(1) to F(0).</text>
</comment>
<comment type="subunit">
    <text evidence="1">F-type ATPases have 2 components, F(1) - the catalytic core - and F(0) - the membrane proton channel. F(1) has five subunits: alpha(3), beta(3), gamma(1), delta(1), epsilon(1). F(0) has four main subunits: a(1), b(1), b'(1) and c(10-14). The alpha and beta chains form an alternating ring which encloses part of the gamma chain. F(1) is attached to F(0) by a central stalk formed by the gamma and epsilon chains, while a peripheral stalk is formed by the delta, b and b' chains.</text>
</comment>
<comment type="subcellular location">
    <subcellularLocation>
        <location evidence="1">Plastid</location>
        <location evidence="1">Chloroplast thylakoid membrane</location>
        <topology evidence="1">Single-pass membrane protein</topology>
    </subcellularLocation>
</comment>
<comment type="miscellaneous">
    <text>In plastids the F-type ATPase is also known as CF(1)CF(0).</text>
</comment>
<comment type="similarity">
    <text evidence="1">Belongs to the ATPase B chain family.</text>
</comment>
<sequence length="182" mass="21003">MENLTNIFLFLSNENEGIQLNTDIFEANIINLALLIVLVINVAKDVLGSILSARKASILDKIEEADKKLNEADKRFTEARLQWSQANIFGEDLEKKTYQRINAFHESQNLKNKDALLREYFSTLVVLDLKNEQVQKQVRNYVMELALIEVYGVFTKLVANKKFQENYSNYSVLLLEKLIGEK</sequence>
<protein>
    <recommendedName>
        <fullName evidence="1">ATP synthase subunit b, chloroplastic</fullName>
    </recommendedName>
    <alternativeName>
        <fullName evidence="1">ATP synthase F(0) sector subunit b</fullName>
    </alternativeName>
    <alternativeName>
        <fullName evidence="1">ATPase subunit I</fullName>
    </alternativeName>
</protein>
<accession>B2XTP4</accession>
<keyword id="KW-0066">ATP synthesis</keyword>
<keyword id="KW-0138">CF(0)</keyword>
<keyword id="KW-0150">Chloroplast</keyword>
<keyword id="KW-0375">Hydrogen ion transport</keyword>
<keyword id="KW-0406">Ion transport</keyword>
<keyword id="KW-0472">Membrane</keyword>
<keyword id="KW-0934">Plastid</keyword>
<keyword id="KW-0793">Thylakoid</keyword>
<keyword id="KW-0812">Transmembrane</keyword>
<keyword id="KW-1133">Transmembrane helix</keyword>
<keyword id="KW-0813">Transport</keyword>
<organism>
    <name type="scientific">Heterosigma akashiwo (strain CCMP452 / OLISTH)</name>
    <dbReference type="NCBI Taxonomy" id="536046"/>
    <lineage>
        <taxon>Eukaryota</taxon>
        <taxon>Sar</taxon>
        <taxon>Stramenopiles</taxon>
        <taxon>Ochrophyta</taxon>
        <taxon>Raphidophyceae</taxon>
        <taxon>Chattonellales</taxon>
        <taxon>Chattonellaceae</taxon>
        <taxon>Heterosigma</taxon>
    </lineage>
</organism>
<dbReference type="EMBL" id="EU168191">
    <property type="protein sequence ID" value="ABV70127.1"/>
    <property type="molecule type" value="Genomic_DNA"/>
</dbReference>
<dbReference type="RefSeq" id="YP_001936380.1">
    <property type="nucleotide sequence ID" value="NC_010772.1"/>
</dbReference>
<dbReference type="SMR" id="B2XTP4"/>
<dbReference type="GeneID" id="6335650"/>
<dbReference type="GO" id="GO:0009535">
    <property type="term" value="C:chloroplast thylakoid membrane"/>
    <property type="evidence" value="ECO:0007669"/>
    <property type="project" value="UniProtKB-SubCell"/>
</dbReference>
<dbReference type="GO" id="GO:0045259">
    <property type="term" value="C:proton-transporting ATP synthase complex"/>
    <property type="evidence" value="ECO:0007669"/>
    <property type="project" value="UniProtKB-KW"/>
</dbReference>
<dbReference type="GO" id="GO:0046933">
    <property type="term" value="F:proton-transporting ATP synthase activity, rotational mechanism"/>
    <property type="evidence" value="ECO:0007669"/>
    <property type="project" value="UniProtKB-UniRule"/>
</dbReference>
<dbReference type="HAMAP" id="MF_01398">
    <property type="entry name" value="ATP_synth_b_bprime"/>
    <property type="match status" value="1"/>
</dbReference>
<dbReference type="InterPro" id="IPR002146">
    <property type="entry name" value="ATP_synth_b/b'su_bac/chlpt"/>
</dbReference>
<dbReference type="PANTHER" id="PTHR34264">
    <property type="entry name" value="ATP SYNTHASE SUBUNIT B, CHLOROPLASTIC"/>
    <property type="match status" value="1"/>
</dbReference>
<dbReference type="PANTHER" id="PTHR34264:SF3">
    <property type="entry name" value="ATP SYNTHASE SUBUNIT B, CHLOROPLASTIC"/>
    <property type="match status" value="1"/>
</dbReference>
<dbReference type="Pfam" id="PF00430">
    <property type="entry name" value="ATP-synt_B"/>
    <property type="match status" value="1"/>
</dbReference>